<organism>
    <name type="scientific">Rhodomonas salina</name>
    <name type="common">Cryptomonas salina</name>
    <dbReference type="NCBI Taxonomy" id="52970"/>
    <lineage>
        <taxon>Eukaryota</taxon>
        <taxon>Cryptophyceae</taxon>
        <taxon>Pyrenomonadales</taxon>
        <taxon>Pyrenomonadaceae</taxon>
        <taxon>Rhodomonas</taxon>
    </lineage>
</organism>
<proteinExistence type="inferred from homology"/>
<protein>
    <recommendedName>
        <fullName evidence="1">Small ribosomal subunit protein uS19c</fullName>
    </recommendedName>
    <alternativeName>
        <fullName evidence="2">30S ribosomal protein S19, chloroplastic</fullName>
    </alternativeName>
</protein>
<gene>
    <name evidence="1" type="primary">rps19</name>
</gene>
<comment type="function">
    <text evidence="1">Protein S19 forms a complex with S13 that binds strongly to the 16S ribosomal RNA.</text>
</comment>
<comment type="subcellular location">
    <subcellularLocation>
        <location>Plastid</location>
        <location>Chloroplast</location>
    </subcellularLocation>
</comment>
<comment type="similarity">
    <text evidence="1">Belongs to the universal ribosomal protein uS19 family.</text>
</comment>
<geneLocation type="chloroplast"/>
<evidence type="ECO:0000255" key="1">
    <source>
        <dbReference type="HAMAP-Rule" id="MF_00531"/>
    </source>
</evidence>
<evidence type="ECO:0000305" key="2"/>
<sequence length="92" mass="10195">MTRSLRKGPFVASHLAKKVDAAVASNSNNIIKTWSRSSTILPTMVGLTIAVYNGKQHVPVYVSDQMVGHKLGEFSPTRTFRSHVKSDKKARR</sequence>
<reference key="1">
    <citation type="journal article" date="2007" name="Mol. Biol. Evol.">
        <title>Plastid genome sequence of the cryptophyte alga Rhodomonas salina CCMP1319: lateral transfer of putative DNA replication machinery and a test of chromist plastid phylogeny.</title>
        <authorList>
            <person name="Khan H."/>
            <person name="Parks N."/>
            <person name="Kozera C."/>
            <person name="Curtis B.A."/>
            <person name="Parsons B.J."/>
            <person name="Bowman S."/>
            <person name="Archibald J.M."/>
        </authorList>
    </citation>
    <scope>NUCLEOTIDE SEQUENCE [LARGE SCALE GENOMIC DNA]</scope>
    <source>
        <strain>CCMP1319 / NEPCC76 / CS-174</strain>
    </source>
</reference>
<feature type="chain" id="PRO_0000354376" description="Small ribosomal subunit protein uS19c">
    <location>
        <begin position="1"/>
        <end position="92"/>
    </location>
</feature>
<keyword id="KW-0150">Chloroplast</keyword>
<keyword id="KW-0934">Plastid</keyword>
<keyword id="KW-0687">Ribonucleoprotein</keyword>
<keyword id="KW-0689">Ribosomal protein</keyword>
<keyword id="KW-0694">RNA-binding</keyword>
<keyword id="KW-0699">rRNA-binding</keyword>
<dbReference type="EMBL" id="EF508371">
    <property type="protein sequence ID" value="ABO70768.1"/>
    <property type="molecule type" value="Genomic_DNA"/>
</dbReference>
<dbReference type="RefSeq" id="YP_001293584.1">
    <property type="nucleotide sequence ID" value="NC_009573.1"/>
</dbReference>
<dbReference type="SMR" id="A6MW05"/>
<dbReference type="GeneID" id="5228526"/>
<dbReference type="GO" id="GO:0009507">
    <property type="term" value="C:chloroplast"/>
    <property type="evidence" value="ECO:0007669"/>
    <property type="project" value="UniProtKB-SubCell"/>
</dbReference>
<dbReference type="GO" id="GO:0005763">
    <property type="term" value="C:mitochondrial small ribosomal subunit"/>
    <property type="evidence" value="ECO:0007669"/>
    <property type="project" value="TreeGrafter"/>
</dbReference>
<dbReference type="GO" id="GO:0019843">
    <property type="term" value="F:rRNA binding"/>
    <property type="evidence" value="ECO:0007669"/>
    <property type="project" value="UniProtKB-UniRule"/>
</dbReference>
<dbReference type="GO" id="GO:0003735">
    <property type="term" value="F:structural constituent of ribosome"/>
    <property type="evidence" value="ECO:0007669"/>
    <property type="project" value="InterPro"/>
</dbReference>
<dbReference type="GO" id="GO:0000028">
    <property type="term" value="P:ribosomal small subunit assembly"/>
    <property type="evidence" value="ECO:0007669"/>
    <property type="project" value="TreeGrafter"/>
</dbReference>
<dbReference type="GO" id="GO:0006412">
    <property type="term" value="P:translation"/>
    <property type="evidence" value="ECO:0007669"/>
    <property type="project" value="UniProtKB-UniRule"/>
</dbReference>
<dbReference type="FunFam" id="3.30.860.10:FF:000001">
    <property type="entry name" value="30S ribosomal protein S19"/>
    <property type="match status" value="1"/>
</dbReference>
<dbReference type="Gene3D" id="3.30.860.10">
    <property type="entry name" value="30s Ribosomal Protein S19, Chain A"/>
    <property type="match status" value="1"/>
</dbReference>
<dbReference type="HAMAP" id="MF_00531">
    <property type="entry name" value="Ribosomal_uS19"/>
    <property type="match status" value="1"/>
</dbReference>
<dbReference type="InterPro" id="IPR002222">
    <property type="entry name" value="Ribosomal_uS19"/>
</dbReference>
<dbReference type="InterPro" id="IPR005732">
    <property type="entry name" value="Ribosomal_uS19_bac-type"/>
</dbReference>
<dbReference type="InterPro" id="IPR020934">
    <property type="entry name" value="Ribosomal_uS19_CS"/>
</dbReference>
<dbReference type="InterPro" id="IPR023575">
    <property type="entry name" value="Ribosomal_uS19_SF"/>
</dbReference>
<dbReference type="NCBIfam" id="TIGR01050">
    <property type="entry name" value="rpsS_bact"/>
    <property type="match status" value="1"/>
</dbReference>
<dbReference type="PANTHER" id="PTHR11880">
    <property type="entry name" value="RIBOSOMAL PROTEIN S19P FAMILY MEMBER"/>
    <property type="match status" value="1"/>
</dbReference>
<dbReference type="PANTHER" id="PTHR11880:SF8">
    <property type="entry name" value="SMALL RIBOSOMAL SUBUNIT PROTEIN US19M"/>
    <property type="match status" value="1"/>
</dbReference>
<dbReference type="Pfam" id="PF00203">
    <property type="entry name" value="Ribosomal_S19"/>
    <property type="match status" value="1"/>
</dbReference>
<dbReference type="PIRSF" id="PIRSF002144">
    <property type="entry name" value="Ribosomal_S19"/>
    <property type="match status" value="1"/>
</dbReference>
<dbReference type="PRINTS" id="PR00975">
    <property type="entry name" value="RIBOSOMALS19"/>
</dbReference>
<dbReference type="SUPFAM" id="SSF54570">
    <property type="entry name" value="Ribosomal protein S19"/>
    <property type="match status" value="1"/>
</dbReference>
<dbReference type="PROSITE" id="PS00323">
    <property type="entry name" value="RIBOSOMAL_S19"/>
    <property type="match status" value="1"/>
</dbReference>
<name>RR19_RHDSA</name>
<accession>A6MW05</accession>